<reference key="1">
    <citation type="journal article" date="2006" name="Proc. Natl. Acad. Sci. U.S.A.">
        <title>Burkholderia xenovorans LB400 harbors a multi-replicon, 9.73-Mbp genome shaped for versatility.</title>
        <authorList>
            <person name="Chain P.S.G."/>
            <person name="Denef V.J."/>
            <person name="Konstantinidis K.T."/>
            <person name="Vergez L.M."/>
            <person name="Agullo L."/>
            <person name="Reyes V.L."/>
            <person name="Hauser L."/>
            <person name="Cordova M."/>
            <person name="Gomez L."/>
            <person name="Gonzalez M."/>
            <person name="Land M."/>
            <person name="Lao V."/>
            <person name="Larimer F."/>
            <person name="LiPuma J.J."/>
            <person name="Mahenthiralingam E."/>
            <person name="Malfatti S.A."/>
            <person name="Marx C.J."/>
            <person name="Parnell J.J."/>
            <person name="Ramette A."/>
            <person name="Richardson P."/>
            <person name="Seeger M."/>
            <person name="Smith D."/>
            <person name="Spilker T."/>
            <person name="Sul W.J."/>
            <person name="Tsoi T.V."/>
            <person name="Ulrich L.E."/>
            <person name="Zhulin I.B."/>
            <person name="Tiedje J.M."/>
        </authorList>
    </citation>
    <scope>NUCLEOTIDE SEQUENCE [LARGE SCALE GENOMIC DNA]</scope>
    <source>
        <strain>LB400</strain>
    </source>
</reference>
<evidence type="ECO:0000255" key="1">
    <source>
        <dbReference type="HAMAP-Rule" id="MF_00022"/>
    </source>
</evidence>
<evidence type="ECO:0000256" key="2">
    <source>
        <dbReference type="SAM" id="MobiDB-lite"/>
    </source>
</evidence>
<gene>
    <name evidence="1" type="primary">gltX</name>
    <name type="ordered locus">Bxeno_A2775</name>
    <name type="ORF">Bxe_A1642</name>
</gene>
<feature type="chain" id="PRO_1000001885" description="Glutamate--tRNA ligase">
    <location>
        <begin position="1"/>
        <end position="469"/>
    </location>
</feature>
<feature type="region of interest" description="Disordered" evidence="2">
    <location>
        <begin position="114"/>
        <end position="139"/>
    </location>
</feature>
<feature type="short sequence motif" description="'HIGH' region" evidence="1">
    <location>
        <begin position="11"/>
        <end position="21"/>
    </location>
</feature>
<feature type="short sequence motif" description="'KMSKS' region" evidence="1">
    <location>
        <begin position="243"/>
        <end position="247"/>
    </location>
</feature>
<feature type="compositionally biased region" description="Basic and acidic residues" evidence="2">
    <location>
        <begin position="114"/>
        <end position="131"/>
    </location>
</feature>
<feature type="binding site" evidence="1">
    <location>
        <position position="246"/>
    </location>
    <ligand>
        <name>ATP</name>
        <dbReference type="ChEBI" id="CHEBI:30616"/>
    </ligand>
</feature>
<keyword id="KW-0030">Aminoacyl-tRNA synthetase</keyword>
<keyword id="KW-0067">ATP-binding</keyword>
<keyword id="KW-0963">Cytoplasm</keyword>
<keyword id="KW-0436">Ligase</keyword>
<keyword id="KW-0547">Nucleotide-binding</keyword>
<keyword id="KW-0648">Protein biosynthesis</keyword>
<keyword id="KW-1185">Reference proteome</keyword>
<comment type="function">
    <text evidence="1">Catalyzes the attachment of glutamate to tRNA(Glu) in a two-step reaction: glutamate is first activated by ATP to form Glu-AMP and then transferred to the acceptor end of tRNA(Glu).</text>
</comment>
<comment type="catalytic activity">
    <reaction evidence="1">
        <text>tRNA(Glu) + L-glutamate + ATP = L-glutamyl-tRNA(Glu) + AMP + diphosphate</text>
        <dbReference type="Rhea" id="RHEA:23540"/>
        <dbReference type="Rhea" id="RHEA-COMP:9663"/>
        <dbReference type="Rhea" id="RHEA-COMP:9680"/>
        <dbReference type="ChEBI" id="CHEBI:29985"/>
        <dbReference type="ChEBI" id="CHEBI:30616"/>
        <dbReference type="ChEBI" id="CHEBI:33019"/>
        <dbReference type="ChEBI" id="CHEBI:78442"/>
        <dbReference type="ChEBI" id="CHEBI:78520"/>
        <dbReference type="ChEBI" id="CHEBI:456215"/>
        <dbReference type="EC" id="6.1.1.17"/>
    </reaction>
</comment>
<comment type="subunit">
    <text evidence="1">Monomer.</text>
</comment>
<comment type="subcellular location">
    <subcellularLocation>
        <location evidence="1">Cytoplasm</location>
    </subcellularLocation>
</comment>
<comment type="similarity">
    <text evidence="1">Belongs to the class-I aminoacyl-tRNA synthetase family. Glutamate--tRNA ligase type 1 subfamily.</text>
</comment>
<organism>
    <name type="scientific">Paraburkholderia xenovorans (strain LB400)</name>
    <dbReference type="NCBI Taxonomy" id="266265"/>
    <lineage>
        <taxon>Bacteria</taxon>
        <taxon>Pseudomonadati</taxon>
        <taxon>Pseudomonadota</taxon>
        <taxon>Betaproteobacteria</taxon>
        <taxon>Burkholderiales</taxon>
        <taxon>Burkholderiaceae</taxon>
        <taxon>Paraburkholderia</taxon>
    </lineage>
</organism>
<sequence>MTTSVRTRFAPSPTGFIHLGNIRSALYPWAFARKMKGTFVLRIEDTDVERSTSESVDAILEGMAWLGLDFDEGPFYQMQRMDRYREVLKQMQDEGLVYLCYMSTEELDALRERQREAGEKPRYDGTWRPEPGKVLPEPPAGVQPVLRFRNPLNGVVAWDDAVKGRIEISNEELDDLVIARPDGTPTYNFCVVVDDLDMRITHVIRGDDHVNNTPRQINILRALGGEPPVYAHLPTVLNEQGEKMSKRHGAMSVMGYRDAGYLPEAVVNYLARLGWSHGDAEIFSREQFVEWFDLEHLGKSPAQYDHDKLNWLNAHYIKEAGNVRLAELARPFFAGLGIDEAMLAQGADLTAVVGLLKDRASTVKEIAENAAMFYRAPAPDAESLTQHVTDAVRPALADLAAALKAVEWTREAIAAALKATLGAHKLKMPQLAMPVRLLVAGTTHTPSIDSVLMLFGRDVVVSRIEKALA</sequence>
<accession>Q13X76</accession>
<proteinExistence type="inferred from homology"/>
<name>SYE_PARXL</name>
<dbReference type="EC" id="6.1.1.17" evidence="1"/>
<dbReference type="EMBL" id="CP000270">
    <property type="protein sequence ID" value="ABE31313.1"/>
    <property type="molecule type" value="Genomic_DNA"/>
</dbReference>
<dbReference type="RefSeq" id="WP_011488902.1">
    <property type="nucleotide sequence ID" value="NC_007951.1"/>
</dbReference>
<dbReference type="SMR" id="Q13X76"/>
<dbReference type="STRING" id="266265.Bxe_A1642"/>
<dbReference type="KEGG" id="bxb:DR64_3802"/>
<dbReference type="KEGG" id="bxe:Bxe_A1642"/>
<dbReference type="PATRIC" id="fig|266265.5.peg.2910"/>
<dbReference type="eggNOG" id="COG0008">
    <property type="taxonomic scope" value="Bacteria"/>
</dbReference>
<dbReference type="OrthoDB" id="9807503at2"/>
<dbReference type="Proteomes" id="UP000001817">
    <property type="component" value="Chromosome 1"/>
</dbReference>
<dbReference type="GO" id="GO:0005829">
    <property type="term" value="C:cytosol"/>
    <property type="evidence" value="ECO:0007669"/>
    <property type="project" value="TreeGrafter"/>
</dbReference>
<dbReference type="GO" id="GO:0005524">
    <property type="term" value="F:ATP binding"/>
    <property type="evidence" value="ECO:0007669"/>
    <property type="project" value="UniProtKB-UniRule"/>
</dbReference>
<dbReference type="GO" id="GO:0004818">
    <property type="term" value="F:glutamate-tRNA ligase activity"/>
    <property type="evidence" value="ECO:0007669"/>
    <property type="project" value="UniProtKB-UniRule"/>
</dbReference>
<dbReference type="GO" id="GO:0000049">
    <property type="term" value="F:tRNA binding"/>
    <property type="evidence" value="ECO:0007669"/>
    <property type="project" value="InterPro"/>
</dbReference>
<dbReference type="GO" id="GO:0008270">
    <property type="term" value="F:zinc ion binding"/>
    <property type="evidence" value="ECO:0007669"/>
    <property type="project" value="InterPro"/>
</dbReference>
<dbReference type="GO" id="GO:0006424">
    <property type="term" value="P:glutamyl-tRNA aminoacylation"/>
    <property type="evidence" value="ECO:0007669"/>
    <property type="project" value="UniProtKB-UniRule"/>
</dbReference>
<dbReference type="CDD" id="cd00808">
    <property type="entry name" value="GluRS_core"/>
    <property type="match status" value="1"/>
</dbReference>
<dbReference type="FunFam" id="3.40.50.620:FF:000007">
    <property type="entry name" value="Glutamate--tRNA ligase"/>
    <property type="match status" value="1"/>
</dbReference>
<dbReference type="Gene3D" id="1.10.10.350">
    <property type="match status" value="1"/>
</dbReference>
<dbReference type="Gene3D" id="1.10.8.70">
    <property type="entry name" value="Glutamate-tRNA synthetase, class I, anticodon-binding domain 1"/>
    <property type="match status" value="1"/>
</dbReference>
<dbReference type="Gene3D" id="3.40.50.620">
    <property type="entry name" value="HUPs"/>
    <property type="match status" value="1"/>
</dbReference>
<dbReference type="HAMAP" id="MF_00022">
    <property type="entry name" value="Glu_tRNA_synth_type1"/>
    <property type="match status" value="1"/>
</dbReference>
<dbReference type="InterPro" id="IPR045462">
    <property type="entry name" value="aa-tRNA-synth_I_cd-bd"/>
</dbReference>
<dbReference type="InterPro" id="IPR020751">
    <property type="entry name" value="aa-tRNA-synth_I_codon-bd_sub2"/>
</dbReference>
<dbReference type="InterPro" id="IPR001412">
    <property type="entry name" value="aa-tRNA-synth_I_CS"/>
</dbReference>
<dbReference type="InterPro" id="IPR008925">
    <property type="entry name" value="aa_tRNA-synth_I_cd-bd_sf"/>
</dbReference>
<dbReference type="InterPro" id="IPR004527">
    <property type="entry name" value="Glu-tRNA-ligase_bac/mito"/>
</dbReference>
<dbReference type="InterPro" id="IPR020752">
    <property type="entry name" value="Glu-tRNA-synth_I_codon-bd_sub1"/>
</dbReference>
<dbReference type="InterPro" id="IPR000924">
    <property type="entry name" value="Glu/Gln-tRNA-synth"/>
</dbReference>
<dbReference type="InterPro" id="IPR020058">
    <property type="entry name" value="Glu/Gln-tRNA-synth_Ib_cat-dom"/>
</dbReference>
<dbReference type="InterPro" id="IPR049940">
    <property type="entry name" value="GluQ/Sye"/>
</dbReference>
<dbReference type="InterPro" id="IPR033910">
    <property type="entry name" value="GluRS_core"/>
</dbReference>
<dbReference type="InterPro" id="IPR014729">
    <property type="entry name" value="Rossmann-like_a/b/a_fold"/>
</dbReference>
<dbReference type="NCBIfam" id="TIGR00464">
    <property type="entry name" value="gltX_bact"/>
    <property type="match status" value="1"/>
</dbReference>
<dbReference type="PANTHER" id="PTHR43311">
    <property type="entry name" value="GLUTAMATE--TRNA LIGASE"/>
    <property type="match status" value="1"/>
</dbReference>
<dbReference type="PANTHER" id="PTHR43311:SF2">
    <property type="entry name" value="GLUTAMATE--TRNA LIGASE, MITOCHONDRIAL-RELATED"/>
    <property type="match status" value="1"/>
</dbReference>
<dbReference type="Pfam" id="PF19269">
    <property type="entry name" value="Anticodon_2"/>
    <property type="match status" value="1"/>
</dbReference>
<dbReference type="Pfam" id="PF00749">
    <property type="entry name" value="tRNA-synt_1c"/>
    <property type="match status" value="1"/>
</dbReference>
<dbReference type="PRINTS" id="PR00987">
    <property type="entry name" value="TRNASYNTHGLU"/>
</dbReference>
<dbReference type="SUPFAM" id="SSF48163">
    <property type="entry name" value="An anticodon-binding domain of class I aminoacyl-tRNA synthetases"/>
    <property type="match status" value="1"/>
</dbReference>
<dbReference type="SUPFAM" id="SSF52374">
    <property type="entry name" value="Nucleotidylyl transferase"/>
    <property type="match status" value="1"/>
</dbReference>
<dbReference type="PROSITE" id="PS00178">
    <property type="entry name" value="AA_TRNA_LIGASE_I"/>
    <property type="match status" value="1"/>
</dbReference>
<protein>
    <recommendedName>
        <fullName evidence="1">Glutamate--tRNA ligase</fullName>
        <ecNumber evidence="1">6.1.1.17</ecNumber>
    </recommendedName>
    <alternativeName>
        <fullName evidence="1">Glutamyl-tRNA synthetase</fullName>
        <shortName evidence="1">GluRS</shortName>
    </alternativeName>
</protein>